<keyword id="KW-1003">Cell membrane</keyword>
<keyword id="KW-0175">Coiled coil</keyword>
<keyword id="KW-0217">Developmental protein</keyword>
<keyword id="KW-0221">Differentiation</keyword>
<keyword id="KW-1015">Disulfide bond</keyword>
<keyword id="KW-0325">Glycoprotein</keyword>
<keyword id="KW-0472">Membrane</keyword>
<keyword id="KW-0524">Neurogenesis</keyword>
<keyword id="KW-0675">Receptor</keyword>
<keyword id="KW-1185">Reference proteome</keyword>
<keyword id="KW-0677">Repeat</keyword>
<keyword id="KW-0732">Signal</keyword>
<keyword id="KW-0812">Transmembrane</keyword>
<keyword id="KW-1133">Transmembrane helix</keyword>
<accession>Q626H5</accession>
<accession>A8WP68</accession>
<feature type="signal peptide" evidence="2">
    <location>
        <begin position="1"/>
        <end position="19"/>
    </location>
</feature>
<feature type="chain" id="PRO_0000248552" description="Plexin-2">
    <location>
        <begin position="20"/>
        <end position="1773"/>
    </location>
</feature>
<feature type="topological domain" description="Extracellular" evidence="2">
    <location>
        <begin position="20"/>
        <end position="1130"/>
    </location>
</feature>
<feature type="transmembrane region" description="Helical" evidence="2">
    <location>
        <begin position="1131"/>
        <end position="1151"/>
    </location>
</feature>
<feature type="topological domain" description="Cytoplasmic" evidence="2">
    <location>
        <begin position="1152"/>
        <end position="1764"/>
    </location>
</feature>
<feature type="domain" description="Sema" evidence="3">
    <location>
        <begin position="20"/>
        <end position="436"/>
    </location>
</feature>
<feature type="domain" description="PSI 1">
    <location>
        <begin position="438"/>
        <end position="480"/>
    </location>
</feature>
<feature type="domain" description="PSI 2">
    <location>
        <begin position="571"/>
        <end position="608"/>
    </location>
</feature>
<feature type="domain" description="PSI 3">
    <location>
        <begin position="698"/>
        <end position="739"/>
    </location>
</feature>
<feature type="domain" description="IPT/TIG 1">
    <location>
        <begin position="741"/>
        <end position="829"/>
    </location>
</feature>
<feature type="domain" description="IPT/TIG 2">
    <location>
        <begin position="831"/>
        <end position="916"/>
    </location>
</feature>
<feature type="domain" description="IPT/TIG 3">
    <location>
        <begin position="919"/>
        <end position="1006"/>
    </location>
</feature>
<feature type="coiled-coil region" evidence="2">
    <location>
        <begin position="1150"/>
        <end position="1188"/>
    </location>
</feature>
<feature type="glycosylation site" description="N-linked (GlcNAc...) asparagine" evidence="2">
    <location>
        <position position="65"/>
    </location>
</feature>
<feature type="glycosylation site" description="N-linked (GlcNAc...) asparagine" evidence="2">
    <location>
        <position position="241"/>
    </location>
</feature>
<feature type="glycosylation site" description="N-linked (GlcNAc...) asparagine" evidence="2">
    <location>
        <position position="494"/>
    </location>
</feature>
<feature type="glycosylation site" description="N-linked (GlcNAc...) asparagine" evidence="2">
    <location>
        <position position="566"/>
    </location>
</feature>
<feature type="glycosylation site" description="N-linked (GlcNAc...) asparagine" evidence="2">
    <location>
        <position position="670"/>
    </location>
</feature>
<feature type="glycosylation site" description="N-linked (GlcNAc...) asparagine" evidence="2">
    <location>
        <position position="693"/>
    </location>
</feature>
<feature type="glycosylation site" description="N-linked (GlcNAc...) asparagine" evidence="2">
    <location>
        <position position="855"/>
    </location>
</feature>
<feature type="glycosylation site" description="N-linked (GlcNAc...) asparagine" evidence="2">
    <location>
        <position position="877"/>
    </location>
</feature>
<feature type="glycosylation site" description="N-linked (GlcNAc...) asparagine" evidence="2">
    <location>
        <position position="975"/>
    </location>
</feature>
<feature type="glycosylation site" description="N-linked (GlcNAc...) asparagine" evidence="2">
    <location>
        <position position="1007"/>
    </location>
</feature>
<feature type="disulfide bond" evidence="3">
    <location>
        <begin position="83"/>
        <end position="90"/>
    </location>
</feature>
<feature type="disulfide bond" evidence="3">
    <location>
        <begin position="117"/>
        <end position="125"/>
    </location>
</feature>
<feature type="disulfide bond" evidence="3">
    <location>
        <begin position="239"/>
        <end position="341"/>
    </location>
</feature>
<feature type="disulfide bond" evidence="3">
    <location>
        <begin position="255"/>
        <end position="292"/>
    </location>
</feature>
<feature type="disulfide bond" evidence="3">
    <location>
        <begin position="310"/>
        <end position="328"/>
    </location>
</feature>
<feature type="disulfide bond" evidence="3">
    <location>
        <begin position="439"/>
        <end position="456"/>
    </location>
</feature>
<feature type="disulfide bond" evidence="3">
    <location>
        <begin position="445"/>
        <end position="479"/>
    </location>
</feature>
<feature type="disulfide bond" evidence="3">
    <location>
        <begin position="448"/>
        <end position="465"/>
    </location>
</feature>
<feature type="disulfide bond" evidence="3">
    <location>
        <begin position="459"/>
        <end position="471"/>
    </location>
</feature>
<feature type="disulfide bond" evidence="3">
    <location>
        <begin position="516"/>
        <end position="538"/>
    </location>
</feature>
<gene>
    <name type="primary">plx-2</name>
    <name type="ORF">CBG00979</name>
</gene>
<protein>
    <recommendedName>
        <fullName>Plexin-2</fullName>
    </recommendedName>
</protein>
<comment type="function">
    <text evidence="1">Involved as a receptor for mab-20/sema-2a in the formation or stabilization of cell-cell contacts at several stages of epithelial morphogenesis. In early embryonic development, required for proper ventral closure of the epidermis. During male tail morphogenesis, involved in precursor cell sorting and in the formation of distinct sensory rays. Involved in axon guidance of SDQL neurons during neurogenesis.</text>
</comment>
<comment type="subunit">
    <text evidence="1">Interacts with mab-20.</text>
</comment>
<comment type="subcellular location">
    <subcellularLocation>
        <location evidence="4">Cell membrane</location>
        <topology evidence="4">Single-pass type I membrane protein</topology>
    </subcellularLocation>
</comment>
<comment type="similarity">
    <text evidence="4">Belongs to the plexin family.</text>
</comment>
<name>PLX2_CAEBR</name>
<sequence length="1773" mass="194786">MLFIESAFLVLTSLSAAEAATPFEGGVKQKVFHSAGHIDDFIVSRDQQTIYIASINRITSLHSSNLSIQNEVSIGPVQDSPWCSADGKSCLKDNRPFSTDVHTKILQILPSGQLLQCGSVKLGSCSTFNSKLSLITEASTPVAANSPDASTVSQIIDNRLVVAASPTKESPGCNPNLPGLNVENAGDLEGEAAVYLRAAYRSSFRFVTTFSHQHFIFVVATVTPRETRLPVTTRLIRFCKNDTKFVSYSEIELQCRGEDNTNYPFLTAVVQTGDKLIASFSASPTSSKNSICVFSMQKVKLTFWYNVDRCRSGTDSIKLSHIGRDTKCVNKAHIPLDEDSCELGVGGSIELVEMSTIDVLAKVTSLMAVDQKALFAGTSSSQIVMLKWDEQNSNKLEEYGRKEIGDGRTGSEVVKMTRFGDFILVQMPYGIVMEELSTCAHHESCTDCQVSVDPLCQWCHPTQSCTTSSRCSGPLTTQCPIVDGDPIPSMVSVNSSTSISFNIHHLPPPVGFVYKCYFGSKSHSKSTKATWTASGISCPSEMFGSPKTFEISLMTSISKNPISRHNFTVFDCAGYSTCSTCMSSEFGCQWCSHKCSSSCGSASAKACVKIQPMKVPIAIGSQQEIVLEALNLDTLDRKTEHFCKVNGQVAPAKIASDSIRCGKIQLAGSNETNANMVVPLSLMANDVVVDIANVSLYSCSNLAADCSSCLALSPSLSCGWCNRKCSHECHESKATAVCDPPKIDRFEPSSGPVEGGTVIKVYGNDLGMSVEDVRGKIYVAGSRCNIVEYQVSNMIACQVDKGVSSGPIKISVGRATMAVAESSDLFSFVRVSIFSAYPLYGPISGGTRITLYGQNLSSGSRISVTVGGLPCPIERINSSTVLTCLTPSGSSIGKSAKVVVHVDHSQIQLDQPFEYRSDPSVNSIFPLSSFKAGGRIVSVQGSSFNTVQSARMFLISSPTPPFEIISDLAPCHIINSTLMTCMTPKILETITRRVEYTRQPVGFLMDNVTAVANLGRRIQMSVYPNPSLSPFKGIRYHQGEQSLILEGHNLNLAAEPNDFKIFVGSERCYVTLVDVRQLVCSGPLKQPKPTDERGVPINGDNPLVTVIVGSLRMELGLIEYSDHALPSRLSFLILGLLLFTVITLIVMCLIFKRRRQEREKEYRKIQLQMENLENNVRKECKQAFAELQTNLVLSPKSTGTITSPELIHFPHFVENLLWADQNLTSAPSLARTLPVTLAQFHALLSFKGFIFTIVEAAESDVSISTSEKSTLASLLISVLLRNFSYCTEIVVDLLKAHIARSVQAKRAELLFRNSDSVVEKMFSKWMSICLYSHLTPQMNSYFYLYKALQYQTDKGPVDAVTGDARYTINEAKLLRESVETKTLKIHIVPFEKCDETTHLEVHACDAICQLKQKVASAVYKETPYSQRPRITQFELKLKCAKRGDIKLTDVSAVETLSQKKLPVKLLTLADYGIQDGATLEMTSAVYTAESYRNSLADSGQSSWSSLDRCSPIYSSSKYYHLTNPSSGTMTFKKRTSPSEIPKSIPEVYLTRLLTSKGTVETYVEDFLESVLYMHDSSYPPILKFFFDILDREASINGVSENICQQWKANGYVLRMWTNFVKNPQLVFDVPHSVSMDANLSTVAQTMMDCFSFSEPVLGAHSPSSRLLFAKDVARLRPLSVDLFKRVKNSPPLGMEELRTELVNMANDVSTCKGSSLALSELLSWVRGNGIRISQLLSSNQETSQQRLPQKLSQVLHVCLETDNHIYSTISDYD</sequence>
<organism>
    <name type="scientific">Caenorhabditis briggsae</name>
    <dbReference type="NCBI Taxonomy" id="6238"/>
    <lineage>
        <taxon>Eukaryota</taxon>
        <taxon>Metazoa</taxon>
        <taxon>Ecdysozoa</taxon>
        <taxon>Nematoda</taxon>
        <taxon>Chromadorea</taxon>
        <taxon>Rhabditida</taxon>
        <taxon>Rhabditina</taxon>
        <taxon>Rhabditomorpha</taxon>
        <taxon>Rhabditoidea</taxon>
        <taxon>Rhabditidae</taxon>
        <taxon>Peloderinae</taxon>
        <taxon>Caenorhabditis</taxon>
    </lineage>
</organism>
<dbReference type="EMBL" id="HE600951">
    <property type="protein sequence ID" value="CAP22274.4"/>
    <property type="molecule type" value="Genomic_DNA"/>
</dbReference>
<dbReference type="SMR" id="Q626H5"/>
<dbReference type="FunCoup" id="Q626H5">
    <property type="interactions" value="3"/>
</dbReference>
<dbReference type="STRING" id="6238.Q626H5"/>
<dbReference type="GlyCosmos" id="Q626H5">
    <property type="glycosylation" value="10 sites, No reported glycans"/>
</dbReference>
<dbReference type="KEGG" id="cbr:CBG_00979"/>
<dbReference type="CTD" id="8572989"/>
<dbReference type="WormBase" id="CBG00979">
    <property type="protein sequence ID" value="CBP41590"/>
    <property type="gene ID" value="WBGene00024280"/>
    <property type="gene designation" value="Cbr-plx-2"/>
</dbReference>
<dbReference type="eggNOG" id="KOG3610">
    <property type="taxonomic scope" value="Eukaryota"/>
</dbReference>
<dbReference type="HOGENOM" id="CLU_001436_1_1_1"/>
<dbReference type="InParanoid" id="Q626H5"/>
<dbReference type="OMA" id="NFSYCTE"/>
<dbReference type="OrthoDB" id="6417648at2759"/>
<dbReference type="Proteomes" id="UP000008549">
    <property type="component" value="Unassembled WGS sequence"/>
</dbReference>
<dbReference type="GO" id="GO:0005886">
    <property type="term" value="C:plasma membrane"/>
    <property type="evidence" value="ECO:0000318"/>
    <property type="project" value="GO_Central"/>
</dbReference>
<dbReference type="GO" id="GO:0002116">
    <property type="term" value="C:semaphorin receptor complex"/>
    <property type="evidence" value="ECO:0000318"/>
    <property type="project" value="GO_Central"/>
</dbReference>
<dbReference type="GO" id="GO:0017154">
    <property type="term" value="F:semaphorin receptor activity"/>
    <property type="evidence" value="ECO:0000318"/>
    <property type="project" value="GO_Central"/>
</dbReference>
<dbReference type="GO" id="GO:0008045">
    <property type="term" value="P:motor neuron axon guidance"/>
    <property type="evidence" value="ECO:0000318"/>
    <property type="project" value="GO_Central"/>
</dbReference>
<dbReference type="GO" id="GO:0007162">
    <property type="term" value="P:negative regulation of cell adhesion"/>
    <property type="evidence" value="ECO:0000318"/>
    <property type="project" value="GO_Central"/>
</dbReference>
<dbReference type="GO" id="GO:0050772">
    <property type="term" value="P:positive regulation of axonogenesis"/>
    <property type="evidence" value="ECO:0000318"/>
    <property type="project" value="GO_Central"/>
</dbReference>
<dbReference type="GO" id="GO:0030334">
    <property type="term" value="P:regulation of cell migration"/>
    <property type="evidence" value="ECO:0000318"/>
    <property type="project" value="GO_Central"/>
</dbReference>
<dbReference type="GO" id="GO:0008360">
    <property type="term" value="P:regulation of cell shape"/>
    <property type="evidence" value="ECO:0000318"/>
    <property type="project" value="GO_Central"/>
</dbReference>
<dbReference type="GO" id="GO:0071526">
    <property type="term" value="P:semaphorin-plexin signaling pathway"/>
    <property type="evidence" value="ECO:0000318"/>
    <property type="project" value="GO_Central"/>
</dbReference>
<dbReference type="GO" id="GO:0097374">
    <property type="term" value="P:sensory neuron axon guidance"/>
    <property type="evidence" value="ECO:0000318"/>
    <property type="project" value="GO_Central"/>
</dbReference>
<dbReference type="GO" id="GO:0007416">
    <property type="term" value="P:synapse assembly"/>
    <property type="evidence" value="ECO:0000318"/>
    <property type="project" value="GO_Central"/>
</dbReference>
<dbReference type="CDD" id="cd01180">
    <property type="entry name" value="IPT_plexin_repeat1"/>
    <property type="match status" value="1"/>
</dbReference>
<dbReference type="CDD" id="cd01179">
    <property type="entry name" value="IPT_plexin_repeat2"/>
    <property type="match status" value="1"/>
</dbReference>
<dbReference type="CDD" id="cd12205">
    <property type="entry name" value="RasGAP_plexin"/>
    <property type="match status" value="1"/>
</dbReference>
<dbReference type="CDD" id="cd11236">
    <property type="entry name" value="Sema_plexin_like"/>
    <property type="match status" value="1"/>
</dbReference>
<dbReference type="FunFam" id="2.60.40.10:FF:002574">
    <property type="entry name" value="Plexin B, putative"/>
    <property type="match status" value="1"/>
</dbReference>
<dbReference type="FunFam" id="1.10.506.10:FF:000039">
    <property type="entry name" value="Plexin-2"/>
    <property type="match status" value="1"/>
</dbReference>
<dbReference type="FunFam" id="1.10.506.10:FF:000040">
    <property type="entry name" value="Plexin-2"/>
    <property type="match status" value="1"/>
</dbReference>
<dbReference type="FunFam" id="2.60.40.10:FF:002442">
    <property type="entry name" value="Plexin-2"/>
    <property type="match status" value="1"/>
</dbReference>
<dbReference type="FunFam" id="2.60.40.10:FF:003360">
    <property type="entry name" value="Plexin-2"/>
    <property type="match status" value="1"/>
</dbReference>
<dbReference type="Gene3D" id="1.10.506.10">
    <property type="entry name" value="GTPase Activation - p120gap, domain 1"/>
    <property type="match status" value="2"/>
</dbReference>
<dbReference type="Gene3D" id="2.60.40.10">
    <property type="entry name" value="Immunoglobulins"/>
    <property type="match status" value="3"/>
</dbReference>
<dbReference type="Gene3D" id="2.130.10.10">
    <property type="entry name" value="YVTN repeat-like/Quinoprotein amine dehydrogenase"/>
    <property type="match status" value="1"/>
</dbReference>
<dbReference type="InterPro" id="IPR013783">
    <property type="entry name" value="Ig-like_fold"/>
</dbReference>
<dbReference type="InterPro" id="IPR014756">
    <property type="entry name" value="Ig_E-set"/>
</dbReference>
<dbReference type="InterPro" id="IPR002909">
    <property type="entry name" value="IPT_dom"/>
</dbReference>
<dbReference type="InterPro" id="IPR031148">
    <property type="entry name" value="Plexin"/>
</dbReference>
<dbReference type="InterPro" id="IPR013548">
    <property type="entry name" value="Plexin_cytoplasmic_RasGAP_dom"/>
</dbReference>
<dbReference type="InterPro" id="IPR046800">
    <property type="entry name" value="Plexin_RBD"/>
</dbReference>
<dbReference type="InterPro" id="IPR002165">
    <property type="entry name" value="Plexin_repeat"/>
</dbReference>
<dbReference type="InterPro" id="IPR016201">
    <property type="entry name" value="PSI"/>
</dbReference>
<dbReference type="InterPro" id="IPR008936">
    <property type="entry name" value="Rho_GTPase_activation_prot"/>
</dbReference>
<dbReference type="InterPro" id="IPR001627">
    <property type="entry name" value="Semap_dom"/>
</dbReference>
<dbReference type="InterPro" id="IPR036352">
    <property type="entry name" value="Semap_dom_sf"/>
</dbReference>
<dbReference type="InterPro" id="IPR015943">
    <property type="entry name" value="WD40/YVTN_repeat-like_dom_sf"/>
</dbReference>
<dbReference type="PANTHER" id="PTHR22625">
    <property type="entry name" value="PLEXIN"/>
    <property type="match status" value="1"/>
</dbReference>
<dbReference type="PANTHER" id="PTHR22625:SF44">
    <property type="entry name" value="PLEXIN-B"/>
    <property type="match status" value="1"/>
</dbReference>
<dbReference type="Pfam" id="PF08337">
    <property type="entry name" value="Plexin_cytopl"/>
    <property type="match status" value="1"/>
</dbReference>
<dbReference type="Pfam" id="PF20170">
    <property type="entry name" value="Plexin_RBD"/>
    <property type="match status" value="1"/>
</dbReference>
<dbReference type="Pfam" id="PF01437">
    <property type="entry name" value="PSI"/>
    <property type="match status" value="1"/>
</dbReference>
<dbReference type="Pfam" id="PF01833">
    <property type="entry name" value="TIG"/>
    <property type="match status" value="3"/>
</dbReference>
<dbReference type="SMART" id="SM00429">
    <property type="entry name" value="IPT"/>
    <property type="match status" value="3"/>
</dbReference>
<dbReference type="SMART" id="SM00423">
    <property type="entry name" value="PSI"/>
    <property type="match status" value="3"/>
</dbReference>
<dbReference type="SMART" id="SM00630">
    <property type="entry name" value="Sema"/>
    <property type="match status" value="1"/>
</dbReference>
<dbReference type="SUPFAM" id="SSF81296">
    <property type="entry name" value="E set domains"/>
    <property type="match status" value="3"/>
</dbReference>
<dbReference type="SUPFAM" id="SSF48350">
    <property type="entry name" value="GTPase activation domain, GAP"/>
    <property type="match status" value="1"/>
</dbReference>
<dbReference type="SUPFAM" id="SSF103575">
    <property type="entry name" value="Plexin repeat"/>
    <property type="match status" value="1"/>
</dbReference>
<dbReference type="SUPFAM" id="SSF101912">
    <property type="entry name" value="Sema domain"/>
    <property type="match status" value="1"/>
</dbReference>
<dbReference type="PROSITE" id="PS51004">
    <property type="entry name" value="SEMA"/>
    <property type="match status" value="1"/>
</dbReference>
<reference key="1">
    <citation type="journal article" date="2003" name="PLoS Biol.">
        <title>The genome sequence of Caenorhabditis briggsae: a platform for comparative genomics.</title>
        <authorList>
            <person name="Stein L.D."/>
            <person name="Bao Z."/>
            <person name="Blasiar D."/>
            <person name="Blumenthal T."/>
            <person name="Brent M.R."/>
            <person name="Chen N."/>
            <person name="Chinwalla A."/>
            <person name="Clarke L."/>
            <person name="Clee C."/>
            <person name="Coghlan A."/>
            <person name="Coulson A."/>
            <person name="D'Eustachio P."/>
            <person name="Fitch D.H.A."/>
            <person name="Fulton L.A."/>
            <person name="Fulton R.E."/>
            <person name="Griffiths-Jones S."/>
            <person name="Harris T.W."/>
            <person name="Hillier L.W."/>
            <person name="Kamath R."/>
            <person name="Kuwabara P.E."/>
            <person name="Mardis E.R."/>
            <person name="Marra M.A."/>
            <person name="Miner T.L."/>
            <person name="Minx P."/>
            <person name="Mullikin J.C."/>
            <person name="Plumb R.W."/>
            <person name="Rogers J."/>
            <person name="Schein J.E."/>
            <person name="Sohrmann M."/>
            <person name="Spieth J."/>
            <person name="Stajich J.E."/>
            <person name="Wei C."/>
            <person name="Willey D."/>
            <person name="Wilson R.K."/>
            <person name="Durbin R.M."/>
            <person name="Waterston R.H."/>
        </authorList>
    </citation>
    <scope>NUCLEOTIDE SEQUENCE [LARGE SCALE GENOMIC DNA]</scope>
    <source>
        <strain>AF16</strain>
    </source>
</reference>
<evidence type="ECO:0000250" key="1">
    <source>
        <dbReference type="UniProtKB" id="O45657"/>
    </source>
</evidence>
<evidence type="ECO:0000255" key="2"/>
<evidence type="ECO:0000255" key="3">
    <source>
        <dbReference type="PROSITE-ProRule" id="PRU00352"/>
    </source>
</evidence>
<evidence type="ECO:0000305" key="4"/>
<proteinExistence type="inferred from homology"/>